<proteinExistence type="inferred from homology"/>
<comment type="function">
    <text evidence="1">Transcriptional repressor of the nikABCDE operon. Is active in the presence of excessive concentrations of intracellular nickel.</text>
</comment>
<comment type="cofactor">
    <cofactor evidence="1">
        <name>Ni(2+)</name>
        <dbReference type="ChEBI" id="CHEBI:49786"/>
    </cofactor>
    <text evidence="1">Binds 1 nickel ion per subunit.</text>
</comment>
<comment type="subunit">
    <text evidence="1">Homotetramer.</text>
</comment>
<comment type="similarity">
    <text evidence="1">Belongs to the transcriptional regulatory CopG/NikR family.</text>
</comment>
<organism>
    <name type="scientific">Escherichia coli O45:K1 (strain S88 / ExPEC)</name>
    <dbReference type="NCBI Taxonomy" id="585035"/>
    <lineage>
        <taxon>Bacteria</taxon>
        <taxon>Pseudomonadati</taxon>
        <taxon>Pseudomonadota</taxon>
        <taxon>Gammaproteobacteria</taxon>
        <taxon>Enterobacterales</taxon>
        <taxon>Enterobacteriaceae</taxon>
        <taxon>Escherichia</taxon>
    </lineage>
</organism>
<dbReference type="EMBL" id="CU928161">
    <property type="protein sequence ID" value="CAR05096.1"/>
    <property type="molecule type" value="Genomic_DNA"/>
</dbReference>
<dbReference type="RefSeq" id="WP_001190062.1">
    <property type="nucleotide sequence ID" value="NC_011742.1"/>
</dbReference>
<dbReference type="SMR" id="B7MDX1"/>
<dbReference type="GeneID" id="93778510"/>
<dbReference type="KEGG" id="ecz:ECS88_3884"/>
<dbReference type="HOGENOM" id="CLU_113319_1_4_6"/>
<dbReference type="Proteomes" id="UP000000747">
    <property type="component" value="Chromosome"/>
</dbReference>
<dbReference type="GO" id="GO:0003700">
    <property type="term" value="F:DNA-binding transcription factor activity"/>
    <property type="evidence" value="ECO:0007669"/>
    <property type="project" value="UniProtKB-UniRule"/>
</dbReference>
<dbReference type="GO" id="GO:0016151">
    <property type="term" value="F:nickel cation binding"/>
    <property type="evidence" value="ECO:0007669"/>
    <property type="project" value="UniProtKB-UniRule"/>
</dbReference>
<dbReference type="GO" id="GO:0043565">
    <property type="term" value="F:sequence-specific DNA binding"/>
    <property type="evidence" value="ECO:0007669"/>
    <property type="project" value="UniProtKB-ARBA"/>
</dbReference>
<dbReference type="GO" id="GO:0010045">
    <property type="term" value="P:response to nickel cation"/>
    <property type="evidence" value="ECO:0007669"/>
    <property type="project" value="InterPro"/>
</dbReference>
<dbReference type="CDD" id="cd22231">
    <property type="entry name" value="RHH_NikR_HicB-like"/>
    <property type="match status" value="1"/>
</dbReference>
<dbReference type="FunFam" id="1.10.1220.10:FF:000001">
    <property type="entry name" value="Nickel-responsive regulator"/>
    <property type="match status" value="1"/>
</dbReference>
<dbReference type="FunFam" id="3.30.70.1150:FF:000002">
    <property type="entry name" value="Nickel-responsive regulator"/>
    <property type="match status" value="1"/>
</dbReference>
<dbReference type="Gene3D" id="3.30.70.1150">
    <property type="entry name" value="ACT-like. Chain A, domain 2"/>
    <property type="match status" value="1"/>
</dbReference>
<dbReference type="Gene3D" id="1.10.1220.10">
    <property type="entry name" value="Met repressor-like"/>
    <property type="match status" value="1"/>
</dbReference>
<dbReference type="HAMAP" id="MF_00476">
    <property type="entry name" value="NikR"/>
    <property type="match status" value="1"/>
</dbReference>
<dbReference type="InterPro" id="IPR027271">
    <property type="entry name" value="Acetolactate_synth/TF_NikR_C"/>
</dbReference>
<dbReference type="InterPro" id="IPR045865">
    <property type="entry name" value="ACT-like_dom_sf"/>
</dbReference>
<dbReference type="InterPro" id="IPR013321">
    <property type="entry name" value="Arc_rbn_hlx_hlx"/>
</dbReference>
<dbReference type="InterPro" id="IPR002145">
    <property type="entry name" value="CopG"/>
</dbReference>
<dbReference type="InterPro" id="IPR050192">
    <property type="entry name" value="CopG/NikR_regulator"/>
</dbReference>
<dbReference type="InterPro" id="IPR022988">
    <property type="entry name" value="Ni_resp_reg_NikR"/>
</dbReference>
<dbReference type="InterPro" id="IPR014160">
    <property type="entry name" value="Nickel_NikR_proteobac"/>
</dbReference>
<dbReference type="InterPro" id="IPR010985">
    <property type="entry name" value="Ribbon_hlx_hlx"/>
</dbReference>
<dbReference type="InterPro" id="IPR014864">
    <property type="entry name" value="TF_NikR_Ni-bd_C"/>
</dbReference>
<dbReference type="NCBIfam" id="TIGR02793">
    <property type="entry name" value="nikR"/>
    <property type="match status" value="1"/>
</dbReference>
<dbReference type="NCBIfam" id="NF002815">
    <property type="entry name" value="PRK02967.1"/>
    <property type="match status" value="1"/>
</dbReference>
<dbReference type="NCBIfam" id="NF003381">
    <property type="entry name" value="PRK04460.1"/>
    <property type="match status" value="1"/>
</dbReference>
<dbReference type="PANTHER" id="PTHR34719">
    <property type="entry name" value="NICKEL-RESPONSIVE REGULATOR"/>
    <property type="match status" value="1"/>
</dbReference>
<dbReference type="PANTHER" id="PTHR34719:SF2">
    <property type="entry name" value="NICKEL-RESPONSIVE REGULATOR"/>
    <property type="match status" value="1"/>
</dbReference>
<dbReference type="Pfam" id="PF08753">
    <property type="entry name" value="NikR_C"/>
    <property type="match status" value="1"/>
</dbReference>
<dbReference type="Pfam" id="PF01402">
    <property type="entry name" value="RHH_1"/>
    <property type="match status" value="1"/>
</dbReference>
<dbReference type="SUPFAM" id="SSF55021">
    <property type="entry name" value="ACT-like"/>
    <property type="match status" value="1"/>
</dbReference>
<dbReference type="SUPFAM" id="SSF47598">
    <property type="entry name" value="Ribbon-helix-helix"/>
    <property type="match status" value="1"/>
</dbReference>
<keyword id="KW-0238">DNA-binding</keyword>
<keyword id="KW-0479">Metal-binding</keyword>
<keyword id="KW-0533">Nickel</keyword>
<keyword id="KW-1185">Reference proteome</keyword>
<keyword id="KW-0678">Repressor</keyword>
<keyword id="KW-0804">Transcription</keyword>
<keyword id="KW-0805">Transcription regulation</keyword>
<protein>
    <recommendedName>
        <fullName evidence="1">Nickel-responsive regulator</fullName>
    </recommendedName>
</protein>
<name>NIKR_ECO45</name>
<accession>B7MDX1</accession>
<feature type="chain" id="PRO_1000125816" description="Nickel-responsive regulator">
    <location>
        <begin position="1"/>
        <end position="133"/>
    </location>
</feature>
<feature type="binding site" evidence="1">
    <location>
        <position position="76"/>
    </location>
    <ligand>
        <name>Ni(2+)</name>
        <dbReference type="ChEBI" id="CHEBI:49786"/>
    </ligand>
</feature>
<feature type="binding site" evidence="1">
    <location>
        <position position="87"/>
    </location>
    <ligand>
        <name>Ni(2+)</name>
        <dbReference type="ChEBI" id="CHEBI:49786"/>
    </ligand>
</feature>
<feature type="binding site" evidence="1">
    <location>
        <position position="89"/>
    </location>
    <ligand>
        <name>Ni(2+)</name>
        <dbReference type="ChEBI" id="CHEBI:49786"/>
    </ligand>
</feature>
<feature type="binding site" evidence="1">
    <location>
        <position position="95"/>
    </location>
    <ligand>
        <name>Ni(2+)</name>
        <dbReference type="ChEBI" id="CHEBI:49786"/>
    </ligand>
</feature>
<gene>
    <name evidence="1" type="primary">nikR</name>
    <name type="ordered locus">ECS88_3884</name>
</gene>
<sequence>MQRVTITLDDDLLETLDSLSQRRGYNNRSEAIRDILRSALAQEATQQHGTQGFAVLSYVYEHEKRDLASRIVSTQHHHHDLSVATLHVHINHDDCLEIAVLKGDMGDVQHFADDVIAQRGVRHGHLQCLPKED</sequence>
<evidence type="ECO:0000255" key="1">
    <source>
        <dbReference type="HAMAP-Rule" id="MF_00476"/>
    </source>
</evidence>
<reference key="1">
    <citation type="journal article" date="2009" name="PLoS Genet.">
        <title>Organised genome dynamics in the Escherichia coli species results in highly diverse adaptive paths.</title>
        <authorList>
            <person name="Touchon M."/>
            <person name="Hoede C."/>
            <person name="Tenaillon O."/>
            <person name="Barbe V."/>
            <person name="Baeriswyl S."/>
            <person name="Bidet P."/>
            <person name="Bingen E."/>
            <person name="Bonacorsi S."/>
            <person name="Bouchier C."/>
            <person name="Bouvet O."/>
            <person name="Calteau A."/>
            <person name="Chiapello H."/>
            <person name="Clermont O."/>
            <person name="Cruveiller S."/>
            <person name="Danchin A."/>
            <person name="Diard M."/>
            <person name="Dossat C."/>
            <person name="Karoui M.E."/>
            <person name="Frapy E."/>
            <person name="Garry L."/>
            <person name="Ghigo J.M."/>
            <person name="Gilles A.M."/>
            <person name="Johnson J."/>
            <person name="Le Bouguenec C."/>
            <person name="Lescat M."/>
            <person name="Mangenot S."/>
            <person name="Martinez-Jehanne V."/>
            <person name="Matic I."/>
            <person name="Nassif X."/>
            <person name="Oztas S."/>
            <person name="Petit M.A."/>
            <person name="Pichon C."/>
            <person name="Rouy Z."/>
            <person name="Ruf C.S."/>
            <person name="Schneider D."/>
            <person name="Tourret J."/>
            <person name="Vacherie B."/>
            <person name="Vallenet D."/>
            <person name="Medigue C."/>
            <person name="Rocha E.P.C."/>
            <person name="Denamur E."/>
        </authorList>
    </citation>
    <scope>NUCLEOTIDE SEQUENCE [LARGE SCALE GENOMIC DNA]</scope>
    <source>
        <strain>S88 / ExPEC</strain>
    </source>
</reference>